<organism>
    <name type="scientific">Corynebacterium efficiens (strain DSM 44549 / YS-314 / AJ 12310 / JCM 11189 / NBRC 100395)</name>
    <dbReference type="NCBI Taxonomy" id="196164"/>
    <lineage>
        <taxon>Bacteria</taxon>
        <taxon>Bacillati</taxon>
        <taxon>Actinomycetota</taxon>
        <taxon>Actinomycetes</taxon>
        <taxon>Mycobacteriales</taxon>
        <taxon>Corynebacteriaceae</taxon>
        <taxon>Corynebacterium</taxon>
    </lineage>
</organism>
<protein>
    <recommendedName>
        <fullName evidence="1">Formate-dependent phosphoribosylglycinamide formyltransferase</fullName>
        <ecNumber evidence="1">6.3.1.21</ecNumber>
    </recommendedName>
    <alternativeName>
        <fullName evidence="1">5'-phosphoribosylglycinamide transformylase 2</fullName>
    </alternativeName>
    <alternativeName>
        <fullName evidence="1">Formate-dependent GAR transformylase</fullName>
    </alternativeName>
    <alternativeName>
        <fullName evidence="1">GAR transformylase 2</fullName>
        <shortName evidence="1">GART 2</shortName>
    </alternativeName>
    <alternativeName>
        <fullName evidence="1">Non-folate glycinamide ribonucleotide transformylase</fullName>
    </alternativeName>
    <alternativeName>
        <fullName evidence="1">Phosphoribosylglycinamide formyltransferase 2</fullName>
    </alternativeName>
</protein>
<sequence length="402" mass="43147">MFIPEKIGTPLSPNATKVMILGSGELGKEVTIAFQRLGVEVHAVDRYDNAPAHQVAHFSYVIDMTDAAAVRELVTTIKPDFIIPEIEALATDELVRIEQEGLATVVPTARATQLTMNREGIRRLASEELGLPTSGYEFCSTFEEFTAAAERLGYPNVVKPVMSSSGKGQSVVTSAEDLESAWEYAMSGARVSNQRVIVEQFVEFDYEITLLTVRGIDPATGKPATWFCEPIGHRQQDGDYVESWQPMEMTAPALENARSVAARITNALGGRGVFGVELFVSGDDVYFSEVSPRPHDTGLVTLATQRFSEFELHAKAVLGLPVDVTLTSPGASAVIYGGVDSPGVSYAGLAEALAVAETDVRLFGKPEAFTKRRMGVAVSTAEDTATARDRATLAAAAVTVHG</sequence>
<proteinExistence type="inferred from homology"/>
<feature type="chain" id="PRO_0000319151" description="Formate-dependent phosphoribosylglycinamide formyltransferase">
    <location>
        <begin position="1"/>
        <end position="402"/>
    </location>
</feature>
<feature type="domain" description="ATP-grasp" evidence="1">
    <location>
        <begin position="123"/>
        <end position="318"/>
    </location>
</feature>
<feature type="binding site" evidence="1">
    <location>
        <begin position="25"/>
        <end position="26"/>
    </location>
    <ligand>
        <name>N(1)-(5-phospho-beta-D-ribosyl)glycinamide</name>
        <dbReference type="ChEBI" id="CHEBI:143788"/>
    </ligand>
</feature>
<feature type="binding site" evidence="1">
    <location>
        <position position="85"/>
    </location>
    <ligand>
        <name>N(1)-(5-phospho-beta-D-ribosyl)glycinamide</name>
        <dbReference type="ChEBI" id="CHEBI:143788"/>
    </ligand>
</feature>
<feature type="binding site" evidence="1">
    <location>
        <position position="118"/>
    </location>
    <ligand>
        <name>ATP</name>
        <dbReference type="ChEBI" id="CHEBI:30616"/>
    </ligand>
</feature>
<feature type="binding site" evidence="1">
    <location>
        <position position="159"/>
    </location>
    <ligand>
        <name>ATP</name>
        <dbReference type="ChEBI" id="CHEBI:30616"/>
    </ligand>
</feature>
<feature type="binding site" evidence="1">
    <location>
        <begin position="164"/>
        <end position="169"/>
    </location>
    <ligand>
        <name>ATP</name>
        <dbReference type="ChEBI" id="CHEBI:30616"/>
    </ligand>
</feature>
<feature type="binding site" evidence="1">
    <location>
        <begin position="199"/>
        <end position="202"/>
    </location>
    <ligand>
        <name>ATP</name>
        <dbReference type="ChEBI" id="CHEBI:30616"/>
    </ligand>
</feature>
<feature type="binding site" evidence="1">
    <location>
        <position position="207"/>
    </location>
    <ligand>
        <name>ATP</name>
        <dbReference type="ChEBI" id="CHEBI:30616"/>
    </ligand>
</feature>
<feature type="binding site" evidence="1">
    <location>
        <position position="277"/>
    </location>
    <ligand>
        <name>Mg(2+)</name>
        <dbReference type="ChEBI" id="CHEBI:18420"/>
    </ligand>
</feature>
<feature type="binding site" evidence="1">
    <location>
        <position position="289"/>
    </location>
    <ligand>
        <name>Mg(2+)</name>
        <dbReference type="ChEBI" id="CHEBI:18420"/>
    </ligand>
</feature>
<feature type="binding site" evidence="1">
    <location>
        <position position="296"/>
    </location>
    <ligand>
        <name>N(1)-(5-phospho-beta-D-ribosyl)glycinamide</name>
        <dbReference type="ChEBI" id="CHEBI:143788"/>
    </ligand>
</feature>
<feature type="binding site" evidence="1">
    <location>
        <position position="365"/>
    </location>
    <ligand>
        <name>N(1)-(5-phospho-beta-D-ribosyl)glycinamide</name>
        <dbReference type="ChEBI" id="CHEBI:143788"/>
    </ligand>
</feature>
<feature type="binding site" evidence="1">
    <location>
        <begin position="372"/>
        <end position="373"/>
    </location>
    <ligand>
        <name>N(1)-(5-phospho-beta-D-ribosyl)glycinamide</name>
        <dbReference type="ChEBI" id="CHEBI:143788"/>
    </ligand>
</feature>
<keyword id="KW-0067">ATP-binding</keyword>
<keyword id="KW-0436">Ligase</keyword>
<keyword id="KW-0460">Magnesium</keyword>
<keyword id="KW-0479">Metal-binding</keyword>
<keyword id="KW-0547">Nucleotide-binding</keyword>
<keyword id="KW-0658">Purine biosynthesis</keyword>
<keyword id="KW-1185">Reference proteome</keyword>
<name>PURT_COREF</name>
<gene>
    <name evidence="1" type="primary">purT</name>
    <name type="ordered locus">CE2594</name>
</gene>
<evidence type="ECO:0000255" key="1">
    <source>
        <dbReference type="HAMAP-Rule" id="MF_01643"/>
    </source>
</evidence>
<evidence type="ECO:0000305" key="2"/>
<reference key="1">
    <citation type="journal article" date="2003" name="Genome Res.">
        <title>Comparative complete genome sequence analysis of the amino acid replacements responsible for the thermostability of Corynebacterium efficiens.</title>
        <authorList>
            <person name="Nishio Y."/>
            <person name="Nakamura Y."/>
            <person name="Kawarabayasi Y."/>
            <person name="Usuda Y."/>
            <person name="Kimura E."/>
            <person name="Sugimoto S."/>
            <person name="Matsui K."/>
            <person name="Yamagishi A."/>
            <person name="Kikuchi H."/>
            <person name="Ikeo K."/>
            <person name="Gojobori T."/>
        </authorList>
    </citation>
    <scope>NUCLEOTIDE SEQUENCE [LARGE SCALE GENOMIC DNA]</scope>
    <source>
        <strain>DSM 44549 / YS-314 / AJ 12310 / JCM 11189 / NBRC 100395</strain>
    </source>
</reference>
<dbReference type="EC" id="6.3.1.21" evidence="1"/>
<dbReference type="EMBL" id="BA000035">
    <property type="protein sequence ID" value="BAC19404.1"/>
    <property type="status" value="ALT_INIT"/>
    <property type="molecule type" value="Genomic_DNA"/>
</dbReference>
<dbReference type="RefSeq" id="WP_035109308.1">
    <property type="nucleotide sequence ID" value="NC_004369.1"/>
</dbReference>
<dbReference type="SMR" id="Q8FMB3"/>
<dbReference type="STRING" id="196164.gene:10743041"/>
<dbReference type="KEGG" id="cef:CE2594"/>
<dbReference type="eggNOG" id="COG0027">
    <property type="taxonomic scope" value="Bacteria"/>
</dbReference>
<dbReference type="HOGENOM" id="CLU_011534_1_3_11"/>
<dbReference type="OrthoDB" id="9804625at2"/>
<dbReference type="UniPathway" id="UPA00074">
    <property type="reaction ID" value="UER00127"/>
</dbReference>
<dbReference type="Proteomes" id="UP000001409">
    <property type="component" value="Chromosome"/>
</dbReference>
<dbReference type="GO" id="GO:0005829">
    <property type="term" value="C:cytosol"/>
    <property type="evidence" value="ECO:0007669"/>
    <property type="project" value="TreeGrafter"/>
</dbReference>
<dbReference type="GO" id="GO:0005524">
    <property type="term" value="F:ATP binding"/>
    <property type="evidence" value="ECO:0007669"/>
    <property type="project" value="UniProtKB-UniRule"/>
</dbReference>
<dbReference type="GO" id="GO:0000287">
    <property type="term" value="F:magnesium ion binding"/>
    <property type="evidence" value="ECO:0007669"/>
    <property type="project" value="InterPro"/>
</dbReference>
<dbReference type="GO" id="GO:0043815">
    <property type="term" value="F:phosphoribosylglycinamide formyltransferase 2 activity"/>
    <property type="evidence" value="ECO:0007669"/>
    <property type="project" value="UniProtKB-UniRule"/>
</dbReference>
<dbReference type="GO" id="GO:0004644">
    <property type="term" value="F:phosphoribosylglycinamide formyltransferase activity"/>
    <property type="evidence" value="ECO:0007669"/>
    <property type="project" value="InterPro"/>
</dbReference>
<dbReference type="GO" id="GO:0006189">
    <property type="term" value="P:'de novo' IMP biosynthetic process"/>
    <property type="evidence" value="ECO:0007669"/>
    <property type="project" value="UniProtKB-UniRule"/>
</dbReference>
<dbReference type="FunFam" id="3.30.1490.20:FF:000013">
    <property type="entry name" value="Formate-dependent phosphoribosylglycinamide formyltransferase"/>
    <property type="match status" value="1"/>
</dbReference>
<dbReference type="Gene3D" id="3.40.50.20">
    <property type="match status" value="1"/>
</dbReference>
<dbReference type="Gene3D" id="3.30.1490.20">
    <property type="entry name" value="ATP-grasp fold, A domain"/>
    <property type="match status" value="1"/>
</dbReference>
<dbReference type="Gene3D" id="3.30.470.20">
    <property type="entry name" value="ATP-grasp fold, B domain"/>
    <property type="match status" value="1"/>
</dbReference>
<dbReference type="HAMAP" id="MF_01643">
    <property type="entry name" value="PurT"/>
    <property type="match status" value="1"/>
</dbReference>
<dbReference type="InterPro" id="IPR011761">
    <property type="entry name" value="ATP-grasp"/>
</dbReference>
<dbReference type="InterPro" id="IPR003135">
    <property type="entry name" value="ATP-grasp_carboxylate-amine"/>
</dbReference>
<dbReference type="InterPro" id="IPR013815">
    <property type="entry name" value="ATP_grasp_subdomain_1"/>
</dbReference>
<dbReference type="InterPro" id="IPR016185">
    <property type="entry name" value="PreATP-grasp_dom_sf"/>
</dbReference>
<dbReference type="InterPro" id="IPR005862">
    <property type="entry name" value="PurT"/>
</dbReference>
<dbReference type="InterPro" id="IPR054350">
    <property type="entry name" value="PurT/PurK_preATP-grasp"/>
</dbReference>
<dbReference type="InterPro" id="IPR048740">
    <property type="entry name" value="PurT_C"/>
</dbReference>
<dbReference type="InterPro" id="IPR011054">
    <property type="entry name" value="Rudment_hybrid_motif"/>
</dbReference>
<dbReference type="NCBIfam" id="NF006766">
    <property type="entry name" value="PRK09288.1"/>
    <property type="match status" value="1"/>
</dbReference>
<dbReference type="NCBIfam" id="TIGR01142">
    <property type="entry name" value="purT"/>
    <property type="match status" value="1"/>
</dbReference>
<dbReference type="PANTHER" id="PTHR43055">
    <property type="entry name" value="FORMATE-DEPENDENT PHOSPHORIBOSYLGLYCINAMIDE FORMYLTRANSFERASE"/>
    <property type="match status" value="1"/>
</dbReference>
<dbReference type="PANTHER" id="PTHR43055:SF1">
    <property type="entry name" value="FORMATE-DEPENDENT PHOSPHORIBOSYLGLYCINAMIDE FORMYLTRANSFERASE"/>
    <property type="match status" value="1"/>
</dbReference>
<dbReference type="Pfam" id="PF02222">
    <property type="entry name" value="ATP-grasp"/>
    <property type="match status" value="1"/>
</dbReference>
<dbReference type="Pfam" id="PF21244">
    <property type="entry name" value="PurT_C"/>
    <property type="match status" value="1"/>
</dbReference>
<dbReference type="Pfam" id="PF22660">
    <property type="entry name" value="RS_preATP-grasp-like"/>
    <property type="match status" value="1"/>
</dbReference>
<dbReference type="SUPFAM" id="SSF56059">
    <property type="entry name" value="Glutathione synthetase ATP-binding domain-like"/>
    <property type="match status" value="1"/>
</dbReference>
<dbReference type="SUPFAM" id="SSF52440">
    <property type="entry name" value="PreATP-grasp domain"/>
    <property type="match status" value="1"/>
</dbReference>
<dbReference type="SUPFAM" id="SSF51246">
    <property type="entry name" value="Rudiment single hybrid motif"/>
    <property type="match status" value="1"/>
</dbReference>
<dbReference type="PROSITE" id="PS50975">
    <property type="entry name" value="ATP_GRASP"/>
    <property type="match status" value="1"/>
</dbReference>
<accession>Q8FMB3</accession>
<comment type="function">
    <text evidence="1">Involved in the de novo purine biosynthesis. Catalyzes the transfer of formate to 5-phospho-ribosyl-glycinamide (GAR), producing 5-phospho-ribosyl-N-formylglycinamide (FGAR). Formate is provided by PurU via hydrolysis of 10-formyl-tetrahydrofolate.</text>
</comment>
<comment type="catalytic activity">
    <reaction evidence="1">
        <text>N(1)-(5-phospho-beta-D-ribosyl)glycinamide + formate + ATP = N(2)-formyl-N(1)-(5-phospho-beta-D-ribosyl)glycinamide + ADP + phosphate + H(+)</text>
        <dbReference type="Rhea" id="RHEA:24829"/>
        <dbReference type="ChEBI" id="CHEBI:15378"/>
        <dbReference type="ChEBI" id="CHEBI:15740"/>
        <dbReference type="ChEBI" id="CHEBI:30616"/>
        <dbReference type="ChEBI" id="CHEBI:43474"/>
        <dbReference type="ChEBI" id="CHEBI:143788"/>
        <dbReference type="ChEBI" id="CHEBI:147286"/>
        <dbReference type="ChEBI" id="CHEBI:456216"/>
        <dbReference type="EC" id="6.3.1.21"/>
    </reaction>
    <physiologicalReaction direction="left-to-right" evidence="1">
        <dbReference type="Rhea" id="RHEA:24830"/>
    </physiologicalReaction>
</comment>
<comment type="pathway">
    <text evidence="1">Purine metabolism; IMP biosynthesis via de novo pathway; N(2)-formyl-N(1)-(5-phospho-D-ribosyl)glycinamide from N(1)-(5-phospho-D-ribosyl)glycinamide (formate route): step 1/1.</text>
</comment>
<comment type="subunit">
    <text evidence="1">Homodimer.</text>
</comment>
<comment type="similarity">
    <text evidence="1">Belongs to the PurK/PurT family.</text>
</comment>
<comment type="sequence caution" evidence="2">
    <conflict type="erroneous initiation">
        <sequence resource="EMBL-CDS" id="BAC19404"/>
    </conflict>
</comment>